<accession>A1UBR7</accession>
<protein>
    <recommendedName>
        <fullName>Putative S-adenosyl-L-methionine-dependent methyltransferase Mkms_1061</fullName>
        <ecNumber>2.1.1.-</ecNumber>
    </recommendedName>
</protein>
<sequence length="308" mass="33234">MARTDNDTWDLASSVGATATMVAAARAVATRAPDAVIDDPFAEPLVRAVGVDFFTRLATGDLTPTDLDPDATGGAGNMDRFADGMAARTRFFDDFFSDAADAGVRQAVILASGLDSRAYRLPWPAGTVVFEIDQPGVITFKSDTLARLGAKPTAVHRTVPVDLRDDWIGALEAAGFDRTEPSAWIAEGLFGYLPPEAQDRLLDQITELSPPGSRLAVEGVVSSPDADDEQIRERMQAVRDQWRQFGFDLDFSELVYTGERAEVAAYLGDRGWRTDSITATALLEKCGLQSAEDSSANFADVRYVTAVK</sequence>
<organism>
    <name type="scientific">Mycobacterium sp. (strain KMS)</name>
    <dbReference type="NCBI Taxonomy" id="189918"/>
    <lineage>
        <taxon>Bacteria</taxon>
        <taxon>Bacillati</taxon>
        <taxon>Actinomycetota</taxon>
        <taxon>Actinomycetes</taxon>
        <taxon>Mycobacteriales</taxon>
        <taxon>Mycobacteriaceae</taxon>
        <taxon>Mycobacterium</taxon>
    </lineage>
</organism>
<comment type="function">
    <text evidence="1">Exhibits S-adenosyl-L-methionine-dependent methyltransferase activity.</text>
</comment>
<comment type="similarity">
    <text evidence="2">Belongs to the UPF0677 family.</text>
</comment>
<gene>
    <name type="ordered locus">Mkms_1061</name>
</gene>
<keyword id="KW-0489">Methyltransferase</keyword>
<keyword id="KW-0949">S-adenosyl-L-methionine</keyword>
<keyword id="KW-0808">Transferase</keyword>
<dbReference type="EC" id="2.1.1.-"/>
<dbReference type="EMBL" id="CP000518">
    <property type="protein sequence ID" value="ABL90275.1"/>
    <property type="molecule type" value="Genomic_DNA"/>
</dbReference>
<dbReference type="SMR" id="A1UBR7"/>
<dbReference type="STRING" id="189918.Mkms_1061"/>
<dbReference type="KEGG" id="mkm:Mkms_1061"/>
<dbReference type="HOGENOM" id="CLU_056160_2_1_11"/>
<dbReference type="OrthoDB" id="9806164at2"/>
<dbReference type="GO" id="GO:0008168">
    <property type="term" value="F:methyltransferase activity"/>
    <property type="evidence" value="ECO:0007669"/>
    <property type="project" value="UniProtKB-KW"/>
</dbReference>
<dbReference type="GO" id="GO:0032259">
    <property type="term" value="P:methylation"/>
    <property type="evidence" value="ECO:0007669"/>
    <property type="project" value="UniProtKB-KW"/>
</dbReference>
<dbReference type="FunFam" id="3.40.50.150:FF:000152">
    <property type="entry name" value="S-adenosyl-L-methionine-dependent methyltransferase"/>
    <property type="match status" value="1"/>
</dbReference>
<dbReference type="Gene3D" id="3.40.50.150">
    <property type="entry name" value="Vaccinia Virus protein VP39"/>
    <property type="match status" value="1"/>
</dbReference>
<dbReference type="InterPro" id="IPR007213">
    <property type="entry name" value="Ppm1/Ppm2/Tcmp"/>
</dbReference>
<dbReference type="InterPro" id="IPR029063">
    <property type="entry name" value="SAM-dependent_MTases_sf"/>
</dbReference>
<dbReference type="InterPro" id="IPR011610">
    <property type="entry name" value="SAM_mthyl_Trfase_ML2640-like"/>
</dbReference>
<dbReference type="NCBIfam" id="TIGR00027">
    <property type="entry name" value="mthyl_TIGR00027"/>
    <property type="match status" value="1"/>
</dbReference>
<dbReference type="PANTHER" id="PTHR43619">
    <property type="entry name" value="S-ADENOSYL-L-METHIONINE-DEPENDENT METHYLTRANSFERASE YKTD-RELATED"/>
    <property type="match status" value="1"/>
</dbReference>
<dbReference type="PANTHER" id="PTHR43619:SF2">
    <property type="entry name" value="S-ADENOSYL-L-METHIONINE-DEPENDENT METHYLTRANSFERASES SUPERFAMILY PROTEIN"/>
    <property type="match status" value="1"/>
</dbReference>
<dbReference type="Pfam" id="PF04072">
    <property type="entry name" value="LCM"/>
    <property type="match status" value="1"/>
</dbReference>
<dbReference type="SUPFAM" id="SSF53335">
    <property type="entry name" value="S-adenosyl-L-methionine-dependent methyltransferases"/>
    <property type="match status" value="1"/>
</dbReference>
<name>Y1061_MYCSK</name>
<feature type="chain" id="PRO_0000361212" description="Putative S-adenosyl-L-methionine-dependent methyltransferase Mkms_1061">
    <location>
        <begin position="1"/>
        <end position="308"/>
    </location>
</feature>
<feature type="binding site" evidence="1">
    <location>
        <position position="133"/>
    </location>
    <ligand>
        <name>S-adenosyl-L-methionine</name>
        <dbReference type="ChEBI" id="CHEBI:59789"/>
    </ligand>
</feature>
<feature type="binding site" evidence="1">
    <location>
        <begin position="162"/>
        <end position="163"/>
    </location>
    <ligand>
        <name>S-adenosyl-L-methionine</name>
        <dbReference type="ChEBI" id="CHEBI:59789"/>
    </ligand>
</feature>
<proteinExistence type="inferred from homology"/>
<reference key="1">
    <citation type="submission" date="2006-12" db="EMBL/GenBank/DDBJ databases">
        <title>Complete sequence of chromosome of Mycobacterium sp. KMS.</title>
        <authorList>
            <consortium name="US DOE Joint Genome Institute"/>
            <person name="Copeland A."/>
            <person name="Lucas S."/>
            <person name="Lapidus A."/>
            <person name="Barry K."/>
            <person name="Detter J.C."/>
            <person name="Glavina del Rio T."/>
            <person name="Hammon N."/>
            <person name="Israni S."/>
            <person name="Dalin E."/>
            <person name="Tice H."/>
            <person name="Pitluck S."/>
            <person name="Kiss H."/>
            <person name="Brettin T."/>
            <person name="Bruce D."/>
            <person name="Han C."/>
            <person name="Tapia R."/>
            <person name="Gilna P."/>
            <person name="Schmutz J."/>
            <person name="Larimer F."/>
            <person name="Land M."/>
            <person name="Hauser L."/>
            <person name="Kyrpides N."/>
            <person name="Mikhailova N."/>
            <person name="Miller C.D."/>
            <person name="Richardson P."/>
        </authorList>
    </citation>
    <scope>NUCLEOTIDE SEQUENCE [LARGE SCALE GENOMIC DNA]</scope>
    <source>
        <strain>KMS</strain>
    </source>
</reference>
<evidence type="ECO:0000250" key="1"/>
<evidence type="ECO:0000305" key="2"/>